<organism>
    <name type="scientific">Arabidopsis thaliana</name>
    <name type="common">Mouse-ear cress</name>
    <dbReference type="NCBI Taxonomy" id="3702"/>
    <lineage>
        <taxon>Eukaryota</taxon>
        <taxon>Viridiplantae</taxon>
        <taxon>Streptophyta</taxon>
        <taxon>Embryophyta</taxon>
        <taxon>Tracheophyta</taxon>
        <taxon>Spermatophyta</taxon>
        <taxon>Magnoliopsida</taxon>
        <taxon>eudicotyledons</taxon>
        <taxon>Gunneridae</taxon>
        <taxon>Pentapetalae</taxon>
        <taxon>rosids</taxon>
        <taxon>malvids</taxon>
        <taxon>Brassicales</taxon>
        <taxon>Brassicaceae</taxon>
        <taxon>Camelineae</taxon>
        <taxon>Arabidopsis</taxon>
    </lineage>
</organism>
<protein>
    <recommendedName>
        <fullName evidence="6">Kinesin-like protein KIN-14J</fullName>
    </recommendedName>
    <alternativeName>
        <fullName evidence="10">Kinesin KinG</fullName>
    </alternativeName>
</protein>
<proteinExistence type="evidence at protein level"/>
<feature type="chain" id="PRO_0000438045" description="Kinesin-like protein KIN-14J">
    <location>
        <begin position="1"/>
        <end position="1071"/>
    </location>
</feature>
<feature type="domain" description="Calponin-homology (CH)" evidence="2">
    <location>
        <begin position="39"/>
        <end position="142"/>
    </location>
</feature>
<feature type="domain" description="Kinesin motor" evidence="3">
    <location>
        <begin position="472"/>
        <end position="800"/>
    </location>
</feature>
<feature type="region of interest" description="Disordered" evidence="4">
    <location>
        <begin position="157"/>
        <end position="181"/>
    </location>
</feature>
<feature type="region of interest" description="Disordered" evidence="4">
    <location>
        <begin position="852"/>
        <end position="931"/>
    </location>
</feature>
<feature type="region of interest" description="Disordered" evidence="4">
    <location>
        <begin position="995"/>
        <end position="1071"/>
    </location>
</feature>
<feature type="coiled-coil region" evidence="1">
    <location>
        <begin position="299"/>
        <end position="389"/>
    </location>
</feature>
<feature type="coiled-coil region" evidence="1">
    <location>
        <begin position="811"/>
        <end position="844"/>
    </location>
</feature>
<feature type="compositionally biased region" description="Basic and acidic residues" evidence="4">
    <location>
        <begin position="158"/>
        <end position="173"/>
    </location>
</feature>
<feature type="compositionally biased region" description="Basic and acidic residues" evidence="4">
    <location>
        <begin position="910"/>
        <end position="921"/>
    </location>
</feature>
<feature type="compositionally biased region" description="Basic and acidic residues" evidence="4">
    <location>
        <begin position="995"/>
        <end position="1017"/>
    </location>
</feature>
<feature type="compositionally biased region" description="Polar residues" evidence="4">
    <location>
        <begin position="1034"/>
        <end position="1049"/>
    </location>
</feature>
<feature type="binding site" evidence="3">
    <location>
        <begin position="556"/>
        <end position="563"/>
    </location>
    <ligand>
        <name>ATP</name>
        <dbReference type="ChEBI" id="CHEBI:30616"/>
    </ligand>
</feature>
<feature type="sequence conflict" description="In Ref. 1; ADL28383." evidence="6" ref="1">
    <original>M</original>
    <variation>V</variation>
    <location>
        <position position="35"/>
    </location>
</feature>
<feature type="sequence conflict" description="In Ref. 1; ADL28383." evidence="6" ref="1">
    <original>L</original>
    <variation>I</variation>
    <location>
        <position position="195"/>
    </location>
</feature>
<feature type="sequence conflict" description="In Ref. 1; ADL28383." evidence="6" ref="1">
    <original>S</original>
    <variation>N</variation>
    <location>
        <position position="808"/>
    </location>
</feature>
<name>KN14J_ARATH</name>
<comment type="alternative products">
    <event type="alternative splicing"/>
    <isoform>
        <id>B3H6Z8-1</id>
        <name>1</name>
        <sequence type="displayed"/>
    </isoform>
    <text>=A number of isoforms are produced. According to EST sequences.</text>
</comment>
<comment type="similarity">
    <text evidence="5">Belongs to the TRAFAC class myosin-kinesin ATPase superfamily. Kinesin family. KIN-14 subfamily.</text>
</comment>
<comment type="sequence caution" evidence="6">
    <conflict type="erroneous gene model prediction">
        <sequence resource="EMBL-CDS" id="AAF19694"/>
    </conflict>
</comment>
<comment type="sequence caution" evidence="6">
    <conflict type="erroneous gene model prediction">
        <sequence resource="EMBL-CDS" id="AAG52420"/>
    </conflict>
</comment>
<dbReference type="EMBL" id="HM590591">
    <property type="protein sequence ID" value="ADL28383.1"/>
    <property type="molecule type" value="mRNA"/>
</dbReference>
<dbReference type="EMBL" id="AC008047">
    <property type="protein sequence ID" value="AAF19694.1"/>
    <property type="status" value="ALT_SEQ"/>
    <property type="molecule type" value="Genomic_DNA"/>
</dbReference>
<dbReference type="EMBL" id="AC011622">
    <property type="protein sequence ID" value="AAG52420.1"/>
    <property type="status" value="ALT_SEQ"/>
    <property type="molecule type" value="Genomic_DNA"/>
</dbReference>
<dbReference type="EMBL" id="CP002684">
    <property type="protein sequence ID" value="AEE34122.1"/>
    <property type="molecule type" value="Genomic_DNA"/>
</dbReference>
<dbReference type="EMBL" id="CP002684">
    <property type="protein sequence ID" value="ANM59867.1"/>
    <property type="molecule type" value="Genomic_DNA"/>
</dbReference>
<dbReference type="PIR" id="C96661">
    <property type="entry name" value="C96661"/>
</dbReference>
<dbReference type="RefSeq" id="NP_001322194.1">
    <molecule id="B3H6Z8-1"/>
    <property type="nucleotide sequence ID" value="NM_001334116.1"/>
</dbReference>
<dbReference type="RefSeq" id="NP_176551.3">
    <molecule id="B3H6Z8-1"/>
    <property type="nucleotide sequence ID" value="NM_105041.4"/>
</dbReference>
<dbReference type="SMR" id="B3H6Z8"/>
<dbReference type="FunCoup" id="B3H6Z8">
    <property type="interactions" value="139"/>
</dbReference>
<dbReference type="STRING" id="3702.B3H6Z8"/>
<dbReference type="GlyGen" id="B3H6Z8">
    <property type="glycosylation" value="1 site"/>
</dbReference>
<dbReference type="iPTMnet" id="B3H6Z8"/>
<dbReference type="PaxDb" id="3702-AT1G63640.1"/>
<dbReference type="EnsemblPlants" id="AT1G63640.1">
    <molecule id="B3H6Z8-1"/>
    <property type="protein sequence ID" value="AT1G63640.1"/>
    <property type="gene ID" value="AT1G63640"/>
</dbReference>
<dbReference type="EnsemblPlants" id="AT1G63640.4">
    <molecule id="B3H6Z8-1"/>
    <property type="protein sequence ID" value="AT1G63640.4"/>
    <property type="gene ID" value="AT1G63640"/>
</dbReference>
<dbReference type="GeneID" id="842668"/>
<dbReference type="Gramene" id="AT1G63640.1">
    <molecule id="B3H6Z8-1"/>
    <property type="protein sequence ID" value="AT1G63640.1"/>
    <property type="gene ID" value="AT1G63640"/>
</dbReference>
<dbReference type="Gramene" id="AT1G63640.4">
    <molecule id="B3H6Z8-1"/>
    <property type="protein sequence ID" value="AT1G63640.4"/>
    <property type="gene ID" value="AT1G63640"/>
</dbReference>
<dbReference type="KEGG" id="ath:AT1G63640"/>
<dbReference type="Araport" id="AT1G63640"/>
<dbReference type="TAIR" id="AT1G63640"/>
<dbReference type="eggNOG" id="KOG0239">
    <property type="taxonomic scope" value="Eukaryota"/>
</dbReference>
<dbReference type="InParanoid" id="B3H6Z8"/>
<dbReference type="PhylomeDB" id="B3H6Z8"/>
<dbReference type="CD-CODE" id="4299E36E">
    <property type="entry name" value="Nucleolus"/>
</dbReference>
<dbReference type="PRO" id="PR:B3H6Z8"/>
<dbReference type="Proteomes" id="UP000006548">
    <property type="component" value="Chromosome 1"/>
</dbReference>
<dbReference type="ExpressionAtlas" id="B3H6Z8">
    <property type="expression patterns" value="baseline and differential"/>
</dbReference>
<dbReference type="GO" id="GO:0005874">
    <property type="term" value="C:microtubule"/>
    <property type="evidence" value="ECO:0007669"/>
    <property type="project" value="UniProtKB-KW"/>
</dbReference>
<dbReference type="GO" id="GO:0005524">
    <property type="term" value="F:ATP binding"/>
    <property type="evidence" value="ECO:0007669"/>
    <property type="project" value="UniProtKB-KW"/>
</dbReference>
<dbReference type="GO" id="GO:0008017">
    <property type="term" value="F:microtubule binding"/>
    <property type="evidence" value="ECO:0007669"/>
    <property type="project" value="InterPro"/>
</dbReference>
<dbReference type="GO" id="GO:0003777">
    <property type="term" value="F:microtubule motor activity"/>
    <property type="evidence" value="ECO:0007669"/>
    <property type="project" value="InterPro"/>
</dbReference>
<dbReference type="GO" id="GO:0007018">
    <property type="term" value="P:microtubule-based movement"/>
    <property type="evidence" value="ECO:0007669"/>
    <property type="project" value="InterPro"/>
</dbReference>
<dbReference type="FunFam" id="1.10.418.10:FF:000083">
    <property type="entry name" value="kinesin-like protein KIN-14J isoform X2"/>
    <property type="match status" value="1"/>
</dbReference>
<dbReference type="FunFam" id="3.40.850.10:FF:000044">
    <property type="entry name" value="p-loop containing nucleoside triphosphate hydrolases superfamily protein"/>
    <property type="match status" value="1"/>
</dbReference>
<dbReference type="Gene3D" id="1.10.418.10">
    <property type="entry name" value="Calponin-like domain"/>
    <property type="match status" value="1"/>
</dbReference>
<dbReference type="Gene3D" id="3.40.850.10">
    <property type="entry name" value="Kinesin motor domain"/>
    <property type="match status" value="1"/>
</dbReference>
<dbReference type="InterPro" id="IPR001715">
    <property type="entry name" value="CH_dom"/>
</dbReference>
<dbReference type="InterPro" id="IPR036872">
    <property type="entry name" value="CH_dom_sf"/>
</dbReference>
<dbReference type="InterPro" id="IPR027640">
    <property type="entry name" value="Kinesin-like_fam"/>
</dbReference>
<dbReference type="InterPro" id="IPR019821">
    <property type="entry name" value="Kinesin_motor_CS"/>
</dbReference>
<dbReference type="InterPro" id="IPR001752">
    <property type="entry name" value="Kinesin_motor_dom"/>
</dbReference>
<dbReference type="InterPro" id="IPR036961">
    <property type="entry name" value="Kinesin_motor_dom_sf"/>
</dbReference>
<dbReference type="InterPro" id="IPR027417">
    <property type="entry name" value="P-loop_NTPase"/>
</dbReference>
<dbReference type="PANTHER" id="PTHR47972:SF14">
    <property type="entry name" value="KINESIN-LIKE PROTEIN KIN-14J"/>
    <property type="match status" value="1"/>
</dbReference>
<dbReference type="PANTHER" id="PTHR47972">
    <property type="entry name" value="KINESIN-LIKE PROTEIN KLP-3"/>
    <property type="match status" value="1"/>
</dbReference>
<dbReference type="Pfam" id="PF00307">
    <property type="entry name" value="CH"/>
    <property type="match status" value="1"/>
</dbReference>
<dbReference type="Pfam" id="PF00225">
    <property type="entry name" value="Kinesin"/>
    <property type="match status" value="1"/>
</dbReference>
<dbReference type="PRINTS" id="PR00380">
    <property type="entry name" value="KINESINHEAVY"/>
</dbReference>
<dbReference type="SMART" id="SM00033">
    <property type="entry name" value="CH"/>
    <property type="match status" value="1"/>
</dbReference>
<dbReference type="SMART" id="SM00129">
    <property type="entry name" value="KISc"/>
    <property type="match status" value="1"/>
</dbReference>
<dbReference type="SUPFAM" id="SSF47576">
    <property type="entry name" value="Calponin-homology domain, CH-domain"/>
    <property type="match status" value="1"/>
</dbReference>
<dbReference type="SUPFAM" id="SSF52540">
    <property type="entry name" value="P-loop containing nucleoside triphosphate hydrolases"/>
    <property type="match status" value="1"/>
</dbReference>
<dbReference type="PROSITE" id="PS50021">
    <property type="entry name" value="CH"/>
    <property type="match status" value="1"/>
</dbReference>
<dbReference type="PROSITE" id="PS00411">
    <property type="entry name" value="KINESIN_MOTOR_1"/>
    <property type="match status" value="1"/>
</dbReference>
<dbReference type="PROSITE" id="PS50067">
    <property type="entry name" value="KINESIN_MOTOR_2"/>
    <property type="match status" value="1"/>
</dbReference>
<gene>
    <name evidence="6" type="primary">KIN14J</name>
    <name evidence="7" type="ordered locus">At1g63640</name>
    <name evidence="9" type="ORF">F24D7.17</name>
    <name evidence="8" type="ORF">F2K11.1</name>
</gene>
<reference key="1">
    <citation type="journal article" date="2011" name="New Phytol.">
        <title>Cytoskeletal dynamics in interphase, mitosis and cytokinesis analysed through Agrobacterium-mediated transient transformation of tobacco BY-2 cells.</title>
        <authorList>
            <person name="Buschmann H."/>
            <person name="Green P."/>
            <person name="Sambade A."/>
            <person name="Doonan J.H."/>
            <person name="Lloyd C.W."/>
        </authorList>
    </citation>
    <scope>NUCLEOTIDE SEQUENCE [MRNA]</scope>
    <source>
        <strain>cv. Landsberg erecta</strain>
    </source>
</reference>
<reference key="2">
    <citation type="journal article" date="2000" name="Nature">
        <title>Sequence and analysis of chromosome 1 of the plant Arabidopsis thaliana.</title>
        <authorList>
            <person name="Theologis A."/>
            <person name="Ecker J.R."/>
            <person name="Palm C.J."/>
            <person name="Federspiel N.A."/>
            <person name="Kaul S."/>
            <person name="White O."/>
            <person name="Alonso J."/>
            <person name="Altafi H."/>
            <person name="Araujo R."/>
            <person name="Bowman C.L."/>
            <person name="Brooks S.Y."/>
            <person name="Buehler E."/>
            <person name="Chan A."/>
            <person name="Chao Q."/>
            <person name="Chen H."/>
            <person name="Cheuk R.F."/>
            <person name="Chin C.W."/>
            <person name="Chung M.K."/>
            <person name="Conn L."/>
            <person name="Conway A.B."/>
            <person name="Conway A.R."/>
            <person name="Creasy T.H."/>
            <person name="Dewar K."/>
            <person name="Dunn P."/>
            <person name="Etgu P."/>
            <person name="Feldblyum T.V."/>
            <person name="Feng J.-D."/>
            <person name="Fong B."/>
            <person name="Fujii C.Y."/>
            <person name="Gill J.E."/>
            <person name="Goldsmith A.D."/>
            <person name="Haas B."/>
            <person name="Hansen N.F."/>
            <person name="Hughes B."/>
            <person name="Huizar L."/>
            <person name="Hunter J.L."/>
            <person name="Jenkins J."/>
            <person name="Johnson-Hopson C."/>
            <person name="Khan S."/>
            <person name="Khaykin E."/>
            <person name="Kim C.J."/>
            <person name="Koo H.L."/>
            <person name="Kremenetskaia I."/>
            <person name="Kurtz D.B."/>
            <person name="Kwan A."/>
            <person name="Lam B."/>
            <person name="Langin-Hooper S."/>
            <person name="Lee A."/>
            <person name="Lee J.M."/>
            <person name="Lenz C.A."/>
            <person name="Li J.H."/>
            <person name="Li Y.-P."/>
            <person name="Lin X."/>
            <person name="Liu S.X."/>
            <person name="Liu Z.A."/>
            <person name="Luros J.S."/>
            <person name="Maiti R."/>
            <person name="Marziali A."/>
            <person name="Militscher J."/>
            <person name="Miranda M."/>
            <person name="Nguyen M."/>
            <person name="Nierman W.C."/>
            <person name="Osborne B.I."/>
            <person name="Pai G."/>
            <person name="Peterson J."/>
            <person name="Pham P.K."/>
            <person name="Rizzo M."/>
            <person name="Rooney T."/>
            <person name="Rowley D."/>
            <person name="Sakano H."/>
            <person name="Salzberg S.L."/>
            <person name="Schwartz J.R."/>
            <person name="Shinn P."/>
            <person name="Southwick A.M."/>
            <person name="Sun H."/>
            <person name="Tallon L.J."/>
            <person name="Tambunga G."/>
            <person name="Toriumi M.J."/>
            <person name="Town C.D."/>
            <person name="Utterback T."/>
            <person name="Van Aken S."/>
            <person name="Vaysberg M."/>
            <person name="Vysotskaia V.S."/>
            <person name="Walker M."/>
            <person name="Wu D."/>
            <person name="Yu G."/>
            <person name="Fraser C.M."/>
            <person name="Venter J.C."/>
            <person name="Davis R.W."/>
        </authorList>
    </citation>
    <scope>NUCLEOTIDE SEQUENCE [LARGE SCALE GENOMIC DNA]</scope>
    <source>
        <strain>cv. Columbia</strain>
    </source>
</reference>
<reference key="3">
    <citation type="journal article" date="2017" name="Plant J.">
        <title>Araport11: a complete reannotation of the Arabidopsis thaliana reference genome.</title>
        <authorList>
            <person name="Cheng C.Y."/>
            <person name="Krishnakumar V."/>
            <person name="Chan A.P."/>
            <person name="Thibaud-Nissen F."/>
            <person name="Schobel S."/>
            <person name="Town C.D."/>
        </authorList>
    </citation>
    <scope>GENOME REANNOTATION</scope>
    <source>
        <strain>cv. Columbia</strain>
    </source>
</reference>
<reference key="4">
    <citation type="journal article" date="2001" name="BMC Genomics">
        <title>Kinesins in the Arabidopsis genome: a comparative analysis among eukaryotes.</title>
        <authorList>
            <person name="Reddy A.S."/>
            <person name="Day I.S."/>
        </authorList>
    </citation>
    <scope>GENE FAMILY</scope>
</reference>
<reference key="5">
    <citation type="journal article" date="2006" name="BMC Genomics">
        <title>Comprehensive comparative analysis of kinesins in photosynthetic eukaryotes.</title>
        <authorList>
            <person name="Richardson D.N."/>
            <person name="Simmons M.P."/>
            <person name="Reddy A.S."/>
        </authorList>
    </citation>
    <scope>GENE FAMILY</scope>
    <scope>NOMENCLATURE</scope>
</reference>
<reference key="6">
    <citation type="journal article" date="2009" name="Plant Physiol.">
        <title>Large-scale Arabidopsis phosphoproteome profiling reveals novel chloroplast kinase substrates and phosphorylation networks.</title>
        <authorList>
            <person name="Reiland S."/>
            <person name="Messerli G."/>
            <person name="Baerenfaller K."/>
            <person name="Gerrits B."/>
            <person name="Endler A."/>
            <person name="Grossmann J."/>
            <person name="Gruissem W."/>
            <person name="Baginsky S."/>
        </authorList>
    </citation>
    <scope>IDENTIFICATION BY MASS SPECTROMETRY [LARGE SCALE ANALYSIS]</scope>
</reference>
<reference key="7">
    <citation type="journal article" date="2012" name="Protoplasma">
        <title>Functions of the Arabidopsis kinesin superfamily of microtubule-based motor proteins.</title>
        <authorList>
            <person name="Zhu C."/>
            <person name="Dixit R."/>
        </authorList>
    </citation>
    <scope>REVIEW</scope>
</reference>
<accession>B3H6Z8</accession>
<accession>E1ACC4</accession>
<accession>Q9CAC9</accession>
<accession>Q9SH47</accession>
<evidence type="ECO:0000255" key="1"/>
<evidence type="ECO:0000255" key="2">
    <source>
        <dbReference type="PROSITE-ProRule" id="PRU00044"/>
    </source>
</evidence>
<evidence type="ECO:0000255" key="3">
    <source>
        <dbReference type="PROSITE-ProRule" id="PRU00283"/>
    </source>
</evidence>
<evidence type="ECO:0000256" key="4">
    <source>
        <dbReference type="SAM" id="MobiDB-lite"/>
    </source>
</evidence>
<evidence type="ECO:0000303" key="5">
    <source>
    </source>
</evidence>
<evidence type="ECO:0000305" key="6"/>
<evidence type="ECO:0000312" key="7">
    <source>
        <dbReference type="Araport" id="AT1G63640"/>
    </source>
</evidence>
<evidence type="ECO:0000312" key="8">
    <source>
        <dbReference type="EMBL" id="AAF19694.1"/>
    </source>
</evidence>
<evidence type="ECO:0000312" key="9">
    <source>
        <dbReference type="EMBL" id="AAG52420.1"/>
    </source>
</evidence>
<evidence type="ECO:0000312" key="10">
    <source>
        <dbReference type="EMBL" id="ADL28383.1"/>
    </source>
</evidence>
<sequence length="1071" mass="119785">MSSHLSQDANMNGVYVRSDVSSMLSFDGSESRESMDDSKKGHQSLVEWLNETLPYLKLPWEASEDELRACLRDGTVLCSLLNQLSPGSMRMGGSFEPASVKIERFLTAMDEMALPRFEVSDIEQGDMVPVLQSLKALKASFSDGSYDKNSLAARRRWSLPEDHSDSRGDDRNFTDGFQSKEGSEIDMSDAKISDLLKSNSLRNAPTRSLFDMLDKLLDESMTKMNGHVSHAMASLLSALVQVIEQRISNQADNLKNQNILFRVREEKYRSRIKVLESLAAGTTKENEIVTNCMEHIKLEKTRIEEKERSEEKDVVRLRKEKERSDAEIRQLKQELKLVKETHENQCLELEAKAQKTRDELEKKLKDAELHVVDSSRKVKELEKLCQSKSQRWEKKECIYQNFIDNHSGALQELSATSLSIKHEVVRTQRKYFEDLNYYGLKLKGVADAAKNYHVVLEENRRLYNEVQELKGNIRVYCRIRPFLPGQNSRQTTIEYIGETGELVVANPFKQGKDTHRLFKFNKVFDQAATQEEVFLDTRPLIRSILDGYNVCIFAYGQTGSGKTYTMSGPSITSKEDWGVNYRALNDLFLLTQSRQNTVMYEVGVQMVEIYNEQVRDILSDGGSSRRLGIWNTALPNGLAVPDASMHCVRSTEDVLELMNIGLMNRTVGATALNERSSRSHCVLSVHVRGVDVETDSILRGSLHLVDLAGSERVDRSEATGERLKEAQHINKSLSALGDVIFALAHKNPHVPYRNSKLTQVLQSSLGGQAKTLMFVQVNPDGDSYAETVSTLKFAERVSGVELGAAKSSKEGRDVRQLMEQVSNLKDVIAKKDEELQNFQKVKGNNATSLKRGLSNLRLVGPTSPRRHSIGASPNARRGKASGLFGRGTSDVDNCSEYSSKHSDSGSQQSSDERKHQKDYHQPSKFAGAAKGIDFDDEDVELVGLADADSEDRLSDISDSCLSMGTETDGSISSAVELTLFPETAKPLELIERPEARMTSEKLEKSVKMGKTEPKDRTNIPSKIPKQTLKPPGQTRPSRLSIATSSSSKALTGAKRPTISTSSSAKPLNRRR</sequence>
<keyword id="KW-0025">Alternative splicing</keyword>
<keyword id="KW-0067">ATP-binding</keyword>
<keyword id="KW-0175">Coiled coil</keyword>
<keyword id="KW-0493">Microtubule</keyword>
<keyword id="KW-0505">Motor protein</keyword>
<keyword id="KW-0547">Nucleotide-binding</keyword>
<keyword id="KW-1185">Reference proteome</keyword>